<organism>
    <name type="scientific">Halorubrum lacusprofundi (strain ATCC 49239 / DSM 5036 / JCM 8891 / ACAM 34)</name>
    <dbReference type="NCBI Taxonomy" id="416348"/>
    <lineage>
        <taxon>Archaea</taxon>
        <taxon>Methanobacteriati</taxon>
        <taxon>Methanobacteriota</taxon>
        <taxon>Stenosarchaea group</taxon>
        <taxon>Halobacteria</taxon>
        <taxon>Halobacteriales</taxon>
        <taxon>Haloferacaceae</taxon>
        <taxon>Halorubrum</taxon>
    </lineage>
</organism>
<dbReference type="EMBL" id="CP001365">
    <property type="protein sequence ID" value="ACM58005.1"/>
    <property type="molecule type" value="Genomic_DNA"/>
</dbReference>
<dbReference type="RefSeq" id="WP_004047211.1">
    <property type="nucleotide sequence ID" value="NC_012029.1"/>
</dbReference>
<dbReference type="SMR" id="B9LSQ8"/>
<dbReference type="GeneID" id="7400548"/>
<dbReference type="KEGG" id="hla:Hlac_2430"/>
<dbReference type="eggNOG" id="arCOG04088">
    <property type="taxonomic scope" value="Archaea"/>
</dbReference>
<dbReference type="HOGENOM" id="CLU_056222_2_0_2"/>
<dbReference type="Proteomes" id="UP000000740">
    <property type="component" value="Chromosome 1"/>
</dbReference>
<dbReference type="GO" id="GO:0022625">
    <property type="term" value="C:cytosolic large ribosomal subunit"/>
    <property type="evidence" value="ECO:0007669"/>
    <property type="project" value="TreeGrafter"/>
</dbReference>
<dbReference type="GO" id="GO:0008097">
    <property type="term" value="F:5S rRNA binding"/>
    <property type="evidence" value="ECO:0007669"/>
    <property type="project" value="InterPro"/>
</dbReference>
<dbReference type="GO" id="GO:0003735">
    <property type="term" value="F:structural constituent of ribosome"/>
    <property type="evidence" value="ECO:0007669"/>
    <property type="project" value="InterPro"/>
</dbReference>
<dbReference type="GO" id="GO:0000027">
    <property type="term" value="P:ribosomal large subunit assembly"/>
    <property type="evidence" value="ECO:0007669"/>
    <property type="project" value="TreeGrafter"/>
</dbReference>
<dbReference type="GO" id="GO:0006412">
    <property type="term" value="P:translation"/>
    <property type="evidence" value="ECO:0007669"/>
    <property type="project" value="UniProtKB-UniRule"/>
</dbReference>
<dbReference type="CDD" id="cd00432">
    <property type="entry name" value="Ribosomal_L18_L5e"/>
    <property type="match status" value="1"/>
</dbReference>
<dbReference type="FunFam" id="3.30.420.100:FF:000008">
    <property type="entry name" value="50S ribosomal protein L18"/>
    <property type="match status" value="1"/>
</dbReference>
<dbReference type="Gene3D" id="3.30.420.100">
    <property type="match status" value="1"/>
</dbReference>
<dbReference type="HAMAP" id="MF_01337_A">
    <property type="entry name" value="Ribosomal_uL18_A"/>
    <property type="match status" value="1"/>
</dbReference>
<dbReference type="InterPro" id="IPR005485">
    <property type="entry name" value="Rbsml_uL18_euk"/>
</dbReference>
<dbReference type="NCBIfam" id="NF006342">
    <property type="entry name" value="PRK08569.1"/>
    <property type="match status" value="1"/>
</dbReference>
<dbReference type="PANTHER" id="PTHR23410:SF12">
    <property type="entry name" value="LARGE RIBOSOMAL SUBUNIT PROTEIN UL18"/>
    <property type="match status" value="1"/>
</dbReference>
<dbReference type="PANTHER" id="PTHR23410">
    <property type="entry name" value="RIBOSOMAL PROTEIN L5-RELATED"/>
    <property type="match status" value="1"/>
</dbReference>
<dbReference type="Pfam" id="PF17144">
    <property type="entry name" value="Ribosomal_L5e"/>
    <property type="match status" value="2"/>
</dbReference>
<dbReference type="PRINTS" id="PR00058">
    <property type="entry name" value="RIBOSOMALL5"/>
</dbReference>
<dbReference type="SUPFAM" id="SSF53137">
    <property type="entry name" value="Translational machinery components"/>
    <property type="match status" value="1"/>
</dbReference>
<sequence length="185" mass="20149">MATGPRYKVPMRRRREVRTDYHQRLRLLKSGKPRLVARVSNAHVRAQLVTPGSDGDETHAAASSEELGEYGWDAPTGNLPSAYLTGYLAGARAVDAGLDEAVLDIGLNTATPGNKTFAVQEGAIDAGLEIPHNDDVLADWSRTRGEHIAAYAEQLDEPLYSGDFDAADLPEHFDDVLATIQEDHE</sequence>
<name>RL18_HALLT</name>
<proteinExistence type="inferred from homology"/>
<reference key="1">
    <citation type="journal article" date="2016" name="Stand. Genomic Sci.">
        <title>Complete genome sequence of the Antarctic Halorubrum lacusprofundi type strain ACAM 34.</title>
        <authorList>
            <person name="Anderson I.J."/>
            <person name="DasSarma P."/>
            <person name="Lucas S."/>
            <person name="Copeland A."/>
            <person name="Lapidus A."/>
            <person name="Del Rio T.G."/>
            <person name="Tice H."/>
            <person name="Dalin E."/>
            <person name="Bruce D.C."/>
            <person name="Goodwin L."/>
            <person name="Pitluck S."/>
            <person name="Sims D."/>
            <person name="Brettin T.S."/>
            <person name="Detter J.C."/>
            <person name="Han C.S."/>
            <person name="Larimer F."/>
            <person name="Hauser L."/>
            <person name="Land M."/>
            <person name="Ivanova N."/>
            <person name="Richardson P."/>
            <person name="Cavicchioli R."/>
            <person name="DasSarma S."/>
            <person name="Woese C.R."/>
            <person name="Kyrpides N.C."/>
        </authorList>
    </citation>
    <scope>NUCLEOTIDE SEQUENCE [LARGE SCALE GENOMIC DNA]</scope>
    <source>
        <strain>ATCC 49239 / DSM 5036 / JCM 8891 / ACAM 34</strain>
    </source>
</reference>
<evidence type="ECO:0000255" key="1">
    <source>
        <dbReference type="HAMAP-Rule" id="MF_01337"/>
    </source>
</evidence>
<evidence type="ECO:0000305" key="2"/>
<keyword id="KW-1185">Reference proteome</keyword>
<keyword id="KW-0687">Ribonucleoprotein</keyword>
<keyword id="KW-0689">Ribosomal protein</keyword>
<keyword id="KW-0694">RNA-binding</keyword>
<keyword id="KW-0699">rRNA-binding</keyword>
<accession>B9LSQ8</accession>
<protein>
    <recommendedName>
        <fullName evidence="1">Large ribosomal subunit protein uL18</fullName>
    </recommendedName>
    <alternativeName>
        <fullName evidence="2">50S ribosomal protein L18</fullName>
    </alternativeName>
</protein>
<comment type="function">
    <text evidence="1">This is one of the proteins that bind and probably mediate the attachment of the 5S RNA into the large ribosomal subunit, where it forms part of the central protuberance.</text>
</comment>
<comment type="subunit">
    <text evidence="1">Part of the 50S ribosomal subunit. Contacts the 5S and 23S rRNAs.</text>
</comment>
<comment type="similarity">
    <text evidence="1">Belongs to the universal ribosomal protein uL18 family.</text>
</comment>
<gene>
    <name evidence="1" type="primary">rpl18</name>
    <name type="ordered locus">Hlac_2430</name>
</gene>
<feature type="chain" id="PRO_1000166234" description="Large ribosomal subunit protein uL18">
    <location>
        <begin position="1"/>
        <end position="185"/>
    </location>
</feature>